<name>CAPP_SHISS</name>
<dbReference type="EC" id="4.1.1.31" evidence="1"/>
<dbReference type="EMBL" id="CP000038">
    <property type="protein sequence ID" value="AAZ90642.1"/>
    <property type="molecule type" value="Genomic_DNA"/>
</dbReference>
<dbReference type="RefSeq" id="WP_001005579.1">
    <property type="nucleotide sequence ID" value="NC_007384.1"/>
</dbReference>
<dbReference type="SMR" id="Q3YV20"/>
<dbReference type="GeneID" id="93777937"/>
<dbReference type="KEGG" id="ssn:SSON_4129"/>
<dbReference type="HOGENOM" id="CLU_006557_2_0_6"/>
<dbReference type="Proteomes" id="UP000002529">
    <property type="component" value="Chromosome"/>
</dbReference>
<dbReference type="GO" id="GO:0005829">
    <property type="term" value="C:cytosol"/>
    <property type="evidence" value="ECO:0007669"/>
    <property type="project" value="TreeGrafter"/>
</dbReference>
<dbReference type="GO" id="GO:0000287">
    <property type="term" value="F:magnesium ion binding"/>
    <property type="evidence" value="ECO:0007669"/>
    <property type="project" value="UniProtKB-UniRule"/>
</dbReference>
<dbReference type="GO" id="GO:0008964">
    <property type="term" value="F:phosphoenolpyruvate carboxylase activity"/>
    <property type="evidence" value="ECO:0007669"/>
    <property type="project" value="UniProtKB-UniRule"/>
</dbReference>
<dbReference type="GO" id="GO:0015977">
    <property type="term" value="P:carbon fixation"/>
    <property type="evidence" value="ECO:0007669"/>
    <property type="project" value="UniProtKB-UniRule"/>
</dbReference>
<dbReference type="GO" id="GO:0006107">
    <property type="term" value="P:oxaloacetate metabolic process"/>
    <property type="evidence" value="ECO:0007669"/>
    <property type="project" value="UniProtKB-UniRule"/>
</dbReference>
<dbReference type="GO" id="GO:0006099">
    <property type="term" value="P:tricarboxylic acid cycle"/>
    <property type="evidence" value="ECO:0007669"/>
    <property type="project" value="InterPro"/>
</dbReference>
<dbReference type="FunFam" id="1.20.1440.90:FF:000002">
    <property type="entry name" value="Phosphoenolpyruvate carboxylase"/>
    <property type="match status" value="1"/>
</dbReference>
<dbReference type="Gene3D" id="1.20.1440.90">
    <property type="entry name" value="Phosphoenolpyruvate/pyruvate domain"/>
    <property type="match status" value="1"/>
</dbReference>
<dbReference type="HAMAP" id="MF_00595">
    <property type="entry name" value="PEPcase_type1"/>
    <property type="match status" value="1"/>
</dbReference>
<dbReference type="InterPro" id="IPR021135">
    <property type="entry name" value="PEP_COase"/>
</dbReference>
<dbReference type="InterPro" id="IPR022805">
    <property type="entry name" value="PEP_COase_bac/pln-type"/>
</dbReference>
<dbReference type="InterPro" id="IPR018129">
    <property type="entry name" value="PEP_COase_Lys_AS"/>
</dbReference>
<dbReference type="InterPro" id="IPR033129">
    <property type="entry name" value="PEPCASE_His_AS"/>
</dbReference>
<dbReference type="InterPro" id="IPR015813">
    <property type="entry name" value="Pyrv/PenolPyrv_kinase-like_dom"/>
</dbReference>
<dbReference type="NCBIfam" id="NF000584">
    <property type="entry name" value="PRK00009.1"/>
    <property type="match status" value="1"/>
</dbReference>
<dbReference type="PANTHER" id="PTHR30523">
    <property type="entry name" value="PHOSPHOENOLPYRUVATE CARBOXYLASE"/>
    <property type="match status" value="1"/>
</dbReference>
<dbReference type="PANTHER" id="PTHR30523:SF6">
    <property type="entry name" value="PHOSPHOENOLPYRUVATE CARBOXYLASE"/>
    <property type="match status" value="1"/>
</dbReference>
<dbReference type="Pfam" id="PF00311">
    <property type="entry name" value="PEPcase"/>
    <property type="match status" value="1"/>
</dbReference>
<dbReference type="PRINTS" id="PR00150">
    <property type="entry name" value="PEPCARBXLASE"/>
</dbReference>
<dbReference type="SUPFAM" id="SSF51621">
    <property type="entry name" value="Phosphoenolpyruvate/pyruvate domain"/>
    <property type="match status" value="1"/>
</dbReference>
<dbReference type="PROSITE" id="PS00781">
    <property type="entry name" value="PEPCASE_1"/>
    <property type="match status" value="1"/>
</dbReference>
<dbReference type="PROSITE" id="PS00393">
    <property type="entry name" value="PEPCASE_2"/>
    <property type="match status" value="1"/>
</dbReference>
<feature type="chain" id="PRO_1000025591" description="Phosphoenolpyruvate carboxylase">
    <location>
        <begin position="1"/>
        <end position="883"/>
    </location>
</feature>
<feature type="active site" evidence="1">
    <location>
        <position position="138"/>
    </location>
</feature>
<feature type="active site" evidence="1">
    <location>
        <position position="546"/>
    </location>
</feature>
<organism>
    <name type="scientific">Shigella sonnei (strain Ss046)</name>
    <dbReference type="NCBI Taxonomy" id="300269"/>
    <lineage>
        <taxon>Bacteria</taxon>
        <taxon>Pseudomonadati</taxon>
        <taxon>Pseudomonadota</taxon>
        <taxon>Gammaproteobacteria</taxon>
        <taxon>Enterobacterales</taxon>
        <taxon>Enterobacteriaceae</taxon>
        <taxon>Shigella</taxon>
    </lineage>
</organism>
<keyword id="KW-0120">Carbon dioxide fixation</keyword>
<keyword id="KW-0456">Lyase</keyword>
<keyword id="KW-0460">Magnesium</keyword>
<keyword id="KW-1185">Reference proteome</keyword>
<accession>Q3YV20</accession>
<gene>
    <name evidence="1" type="primary">ppc</name>
    <name type="ordered locus">SSON_4129</name>
</gene>
<evidence type="ECO:0000255" key="1">
    <source>
        <dbReference type="HAMAP-Rule" id="MF_00595"/>
    </source>
</evidence>
<proteinExistence type="inferred from homology"/>
<sequence length="883" mass="99077">MNEQYSALRSNVSMLGKVLGETIKDALGEHILERVETIRKLSKSSRAGNDANRQELLTTLQNLSNDELLPVARAFSQFLNLANTAEQYHSISPKGEAASNPEVIARTLRKLKNQPELSEDTIKKAVESLSLELVLTAHPTEITRRTLIHKMVEVNACLKQLDNKDIADYEHNQLMRRLRQLIAQSWHTDEIRKLRPSPVDEAKWGFAVVENSLWQGVPNYLRELNEQLEENLGYKLPVEFVPVRFTSWMGGDRDGNPNVTADITRHVLLLSRWKATDLFLKDIQVLVSELSMVEATPELLALVGEEGAAEPYRYLMKNLRSRLMATQAWLEARLKGEELPKPEGLLTQNEELWEPLYACYQSLQACGMGIIANGDLLDTLRRVKCFGVPLVRIDIRQESTRHTEALGELTRYLGIGDYESWSEADKQAFLIRELNSKRPLLPRNWQPSAETREVLDTCQVIAEAPQGSIAAYVISMAKTPSDVLAVHLLLKEAGIGFAMPVAPLFETLDDLNNANDVMTQLLNIDWYRGLIQGKQMVMIGYSDSAKDAGVMAASWAQYQAQDALIKTCEKAGIELTLFHGRGGSIGRGGAPAHAALLSQPPGSLKGGLRVTEQGEMIRFKYGLPEITVSSLSLYTGAILEANLLPPPEPKESWRRIMDELSVISCDLYRGYVRENKDFVPYFRSATPEQELGKLPLGSRPAKRRPTGGVESLRAIPWIFAWTQNRLMLPAWLGAGTALQKVVEDGKQSELEAMCRDWPFFSTRLGMLEMVFAKADLWLAEYYDQRLVDKALWPLGKELRNLQEEDIKVVLAIANDSHLMADLPWIAESIQLRNIYTDPLNVLQAELLHRSRQAEKEGQEPDPRVEQALMVTIAGIAAGMRNTG</sequence>
<comment type="function">
    <text evidence="1">Forms oxaloacetate, a four-carbon dicarboxylic acid source for the tricarboxylic acid cycle.</text>
</comment>
<comment type="catalytic activity">
    <reaction evidence="1">
        <text>oxaloacetate + phosphate = phosphoenolpyruvate + hydrogencarbonate</text>
        <dbReference type="Rhea" id="RHEA:28370"/>
        <dbReference type="ChEBI" id="CHEBI:16452"/>
        <dbReference type="ChEBI" id="CHEBI:17544"/>
        <dbReference type="ChEBI" id="CHEBI:43474"/>
        <dbReference type="ChEBI" id="CHEBI:58702"/>
        <dbReference type="EC" id="4.1.1.31"/>
    </reaction>
</comment>
<comment type="cofactor">
    <cofactor evidence="1">
        <name>Mg(2+)</name>
        <dbReference type="ChEBI" id="CHEBI:18420"/>
    </cofactor>
</comment>
<comment type="similarity">
    <text evidence="1">Belongs to the PEPCase type 1 family.</text>
</comment>
<reference key="1">
    <citation type="journal article" date="2005" name="Nucleic Acids Res.">
        <title>Genome dynamics and diversity of Shigella species, the etiologic agents of bacillary dysentery.</title>
        <authorList>
            <person name="Yang F."/>
            <person name="Yang J."/>
            <person name="Zhang X."/>
            <person name="Chen L."/>
            <person name="Jiang Y."/>
            <person name="Yan Y."/>
            <person name="Tang X."/>
            <person name="Wang J."/>
            <person name="Xiong Z."/>
            <person name="Dong J."/>
            <person name="Xue Y."/>
            <person name="Zhu Y."/>
            <person name="Xu X."/>
            <person name="Sun L."/>
            <person name="Chen S."/>
            <person name="Nie H."/>
            <person name="Peng J."/>
            <person name="Xu J."/>
            <person name="Wang Y."/>
            <person name="Yuan Z."/>
            <person name="Wen Y."/>
            <person name="Yao Z."/>
            <person name="Shen Y."/>
            <person name="Qiang B."/>
            <person name="Hou Y."/>
            <person name="Yu J."/>
            <person name="Jin Q."/>
        </authorList>
    </citation>
    <scope>NUCLEOTIDE SEQUENCE [LARGE SCALE GENOMIC DNA]</scope>
    <source>
        <strain>Ss046</strain>
    </source>
</reference>
<protein>
    <recommendedName>
        <fullName evidence="1">Phosphoenolpyruvate carboxylase</fullName>
        <shortName evidence="1">PEPC</shortName>
        <shortName evidence="1">PEPCase</shortName>
        <ecNumber evidence="1">4.1.1.31</ecNumber>
    </recommendedName>
</protein>